<dbReference type="EC" id="2.7.7.108"/>
<dbReference type="EMBL" id="U00090">
    <property type="protein sequence ID" value="AAB91760.1"/>
    <property type="molecule type" value="Genomic_DNA"/>
</dbReference>
<dbReference type="RefSeq" id="NP_443958.1">
    <property type="nucleotide sequence ID" value="NC_000914.2"/>
</dbReference>
<dbReference type="RefSeq" id="WP_010875292.1">
    <property type="nucleotide sequence ID" value="NC_000914.2"/>
</dbReference>
<dbReference type="SMR" id="P55548"/>
<dbReference type="KEGG" id="rhi:NGR_a02670"/>
<dbReference type="PATRIC" id="fig|394.7.peg.282"/>
<dbReference type="eggNOG" id="COG2184">
    <property type="taxonomic scope" value="Bacteria"/>
</dbReference>
<dbReference type="HOGENOM" id="CLU_080158_0_2_5"/>
<dbReference type="OrthoDB" id="9813719at2"/>
<dbReference type="Proteomes" id="UP000001054">
    <property type="component" value="Plasmid pNGR234a"/>
</dbReference>
<dbReference type="GO" id="GO:0070733">
    <property type="term" value="F:AMPylase activity"/>
    <property type="evidence" value="ECO:0007669"/>
    <property type="project" value="RHEA"/>
</dbReference>
<dbReference type="GO" id="GO:0005524">
    <property type="term" value="F:ATP binding"/>
    <property type="evidence" value="ECO:0007669"/>
    <property type="project" value="UniProtKB-KW"/>
</dbReference>
<dbReference type="GO" id="GO:0051302">
    <property type="term" value="P:regulation of cell division"/>
    <property type="evidence" value="ECO:0007669"/>
    <property type="project" value="TreeGrafter"/>
</dbReference>
<dbReference type="Gene3D" id="1.10.3290.10">
    <property type="entry name" value="Fido-like domain"/>
    <property type="match status" value="1"/>
</dbReference>
<dbReference type="InterPro" id="IPR003812">
    <property type="entry name" value="Fido"/>
</dbReference>
<dbReference type="InterPro" id="IPR036597">
    <property type="entry name" value="Fido-like_dom_sf"/>
</dbReference>
<dbReference type="PANTHER" id="PTHR39560">
    <property type="entry name" value="PROTEIN ADENYLYLTRANSFERASE FIC-RELATED"/>
    <property type="match status" value="1"/>
</dbReference>
<dbReference type="PANTHER" id="PTHR39560:SF1">
    <property type="entry name" value="PROTEIN ADENYLYLTRANSFERASE FIC-RELATED"/>
    <property type="match status" value="1"/>
</dbReference>
<dbReference type="Pfam" id="PF02661">
    <property type="entry name" value="Fic"/>
    <property type="match status" value="1"/>
</dbReference>
<dbReference type="SUPFAM" id="SSF140931">
    <property type="entry name" value="Fic-like"/>
    <property type="match status" value="1"/>
</dbReference>
<dbReference type="PROSITE" id="PS51459">
    <property type="entry name" value="FIDO"/>
    <property type="match status" value="1"/>
</dbReference>
<gene>
    <name type="ordered locus">NGR_a02670</name>
    <name type="ORF">y4lH</name>
</gene>
<comment type="function">
    <text evidence="1">Probable adenylyltransferase that mediates the addition of adenosine 5'-monophosphate (AMP) to specific residues of target proteins.</text>
</comment>
<comment type="catalytic activity">
    <reaction>
        <text>L-tyrosyl-[protein] + ATP = O-(5'-adenylyl)-L-tyrosyl-[protein] + diphosphate</text>
        <dbReference type="Rhea" id="RHEA:54288"/>
        <dbReference type="Rhea" id="RHEA-COMP:10136"/>
        <dbReference type="Rhea" id="RHEA-COMP:13846"/>
        <dbReference type="ChEBI" id="CHEBI:30616"/>
        <dbReference type="ChEBI" id="CHEBI:33019"/>
        <dbReference type="ChEBI" id="CHEBI:46858"/>
        <dbReference type="ChEBI" id="CHEBI:83624"/>
        <dbReference type="EC" id="2.7.7.108"/>
    </reaction>
</comment>
<comment type="catalytic activity">
    <reaction>
        <text>L-threonyl-[protein] + ATP = 3-O-(5'-adenylyl)-L-threonyl-[protein] + diphosphate</text>
        <dbReference type="Rhea" id="RHEA:54292"/>
        <dbReference type="Rhea" id="RHEA-COMP:11060"/>
        <dbReference type="Rhea" id="RHEA-COMP:13847"/>
        <dbReference type="ChEBI" id="CHEBI:30013"/>
        <dbReference type="ChEBI" id="CHEBI:30616"/>
        <dbReference type="ChEBI" id="CHEBI:33019"/>
        <dbReference type="ChEBI" id="CHEBI:138113"/>
        <dbReference type="EC" id="2.7.7.108"/>
    </reaction>
</comment>
<comment type="similarity">
    <text evidence="3">Belongs to the fic family.</text>
</comment>
<reference key="1">
    <citation type="journal article" date="1997" name="Nature">
        <title>Molecular basis of symbiosis between Rhizobium and legumes.</title>
        <authorList>
            <person name="Freiberg C.A."/>
            <person name="Fellay R."/>
            <person name="Bairoch A."/>
            <person name="Broughton W.J."/>
            <person name="Rosenthal A."/>
            <person name="Perret X."/>
        </authorList>
    </citation>
    <scope>NUCLEOTIDE SEQUENCE [LARGE SCALE GENOMIC DNA]</scope>
    <source>
        <strain>NBRC 101917 / NGR234</strain>
    </source>
</reference>
<reference key="2">
    <citation type="journal article" date="2009" name="Appl. Environ. Microbiol.">
        <title>Rhizobium sp. strain NGR234 possesses a remarkable number of secretion systems.</title>
        <authorList>
            <person name="Schmeisser C."/>
            <person name="Liesegang H."/>
            <person name="Krysciak D."/>
            <person name="Bakkou N."/>
            <person name="Le Quere A."/>
            <person name="Wollherr A."/>
            <person name="Heinemeyer I."/>
            <person name="Morgenstern B."/>
            <person name="Pommerening-Roeser A."/>
            <person name="Flores M."/>
            <person name="Palacios R."/>
            <person name="Brenner S."/>
            <person name="Gottschalk G."/>
            <person name="Schmitz R.A."/>
            <person name="Broughton W.J."/>
            <person name="Perret X."/>
            <person name="Strittmatter A.W."/>
            <person name="Streit W.R."/>
        </authorList>
    </citation>
    <scope>NUCLEOTIDE SEQUENCE [LARGE SCALE GENOMIC DNA]</scope>
    <source>
        <strain>NBRC 101917 / NGR234</strain>
    </source>
</reference>
<organism>
    <name type="scientific">Sinorhizobium fredii (strain NBRC 101917 / NGR234)</name>
    <dbReference type="NCBI Taxonomy" id="394"/>
    <lineage>
        <taxon>Bacteria</taxon>
        <taxon>Pseudomonadati</taxon>
        <taxon>Pseudomonadota</taxon>
        <taxon>Alphaproteobacteria</taxon>
        <taxon>Hyphomicrobiales</taxon>
        <taxon>Rhizobiaceae</taxon>
        <taxon>Sinorhizobium/Ensifer group</taxon>
        <taxon>Sinorhizobium</taxon>
    </lineage>
</organism>
<keyword id="KW-0067">ATP-binding</keyword>
<keyword id="KW-0547">Nucleotide-binding</keyword>
<keyword id="KW-0548">Nucleotidyltransferase</keyword>
<keyword id="KW-0614">Plasmid</keyword>
<keyword id="KW-1185">Reference proteome</keyword>
<keyword id="KW-0808">Transferase</keyword>
<name>Y4LH_SINFN</name>
<accession>P55548</accession>
<sequence length="192" mass="22438">MVRYNAVEDPLCYPGTHVLRNRANIPDQNELDEFEQLMFDSRAREALPDGDLDFAHYRALHRHFFQDVYEWAGQTRIIRTGKGENWFCYPEYIEREANRLFAELAARDHLARTESKEAFAKGASWFLAEINAIHPFREGNGRTQLVFLTMLTRYAGYELDESKLEPKRFLDAMIRSFSGDLAPLAAEIRRMI</sequence>
<feature type="chain" id="PRO_0000200902" description="Probable protein adenylyltransferase y4lH">
    <location>
        <begin position="1"/>
        <end position="192"/>
    </location>
</feature>
<feature type="domain" description="Fido" evidence="2">
    <location>
        <begin position="52"/>
        <end position="190"/>
    </location>
</feature>
<feature type="binding site" evidence="1">
    <location>
        <begin position="82"/>
        <end position="83"/>
    </location>
    <ligand>
        <name>ATP</name>
        <dbReference type="ChEBI" id="CHEBI:30616"/>
    </ligand>
</feature>
<feature type="binding site" evidence="1">
    <location>
        <begin position="139"/>
        <end position="141"/>
    </location>
    <ligand>
        <name>ATP</name>
        <dbReference type="ChEBI" id="CHEBI:30616"/>
    </ligand>
</feature>
<proteinExistence type="inferred from homology"/>
<geneLocation type="plasmid">
    <name>sym pNGR234a</name>
</geneLocation>
<protein>
    <recommendedName>
        <fullName>Probable protein adenylyltransferase y4lH</fullName>
        <ecNumber>2.7.7.108</ecNumber>
    </recommendedName>
</protein>
<evidence type="ECO:0000250" key="1"/>
<evidence type="ECO:0000255" key="2">
    <source>
        <dbReference type="PROSITE-ProRule" id="PRU00791"/>
    </source>
</evidence>
<evidence type="ECO:0000305" key="3"/>